<protein>
    <recommendedName>
        <fullName evidence="1">Ribose-phosphate pyrophosphokinase</fullName>
        <shortName evidence="1">RPPK</shortName>
        <ecNumber evidence="1">2.7.6.1</ecNumber>
    </recommendedName>
    <alternativeName>
        <fullName evidence="1">5-phospho-D-ribosyl alpha-1-diphosphate synthase</fullName>
    </alternativeName>
    <alternativeName>
        <fullName evidence="1">Phosphoribosyl diphosphate synthase</fullName>
    </alternativeName>
    <alternativeName>
        <fullName evidence="1">Phosphoribosyl pyrophosphate synthase</fullName>
        <shortName evidence="1">P-Rib-PP synthase</shortName>
        <shortName evidence="1">PRPP synthase</shortName>
        <shortName evidence="1">PRPPase</shortName>
    </alternativeName>
</protein>
<feature type="chain" id="PRO_0000141123" description="Ribose-phosphate pyrophosphokinase">
    <location>
        <begin position="1"/>
        <end position="312"/>
    </location>
</feature>
<feature type="active site" evidence="1">
    <location>
        <position position="192"/>
    </location>
</feature>
<feature type="binding site" evidence="1">
    <location>
        <begin position="34"/>
        <end position="36"/>
    </location>
    <ligand>
        <name>ATP</name>
        <dbReference type="ChEBI" id="CHEBI:30616"/>
    </ligand>
</feature>
<feature type="binding site" evidence="1">
    <location>
        <begin position="93"/>
        <end position="94"/>
    </location>
    <ligand>
        <name>ATP</name>
        <dbReference type="ChEBI" id="CHEBI:30616"/>
    </ligand>
</feature>
<feature type="binding site" evidence="1">
    <location>
        <position position="127"/>
    </location>
    <ligand>
        <name>Mg(2+)</name>
        <dbReference type="ChEBI" id="CHEBI:18420"/>
        <label>1</label>
    </ligand>
</feature>
<feature type="binding site" evidence="1">
    <location>
        <position position="168"/>
    </location>
    <ligand>
        <name>Mg(2+)</name>
        <dbReference type="ChEBI" id="CHEBI:18420"/>
        <label>2</label>
    </ligand>
</feature>
<feature type="binding site" evidence="1">
    <location>
        <position position="194"/>
    </location>
    <ligand>
        <name>D-ribose 5-phosphate</name>
        <dbReference type="ChEBI" id="CHEBI:78346"/>
    </ligand>
</feature>
<feature type="binding site" evidence="1">
    <location>
        <position position="218"/>
    </location>
    <ligand>
        <name>D-ribose 5-phosphate</name>
        <dbReference type="ChEBI" id="CHEBI:78346"/>
    </ligand>
</feature>
<feature type="binding site" evidence="1">
    <location>
        <begin position="222"/>
        <end position="226"/>
    </location>
    <ligand>
        <name>D-ribose 5-phosphate</name>
        <dbReference type="ChEBI" id="CHEBI:78346"/>
    </ligand>
</feature>
<accession>Q9AAV6</accession>
<evidence type="ECO:0000255" key="1">
    <source>
        <dbReference type="HAMAP-Rule" id="MF_00583"/>
    </source>
</evidence>
<gene>
    <name evidence="1" type="primary">prs</name>
    <name type="ordered locus">CC_0487</name>
</gene>
<dbReference type="EC" id="2.7.6.1" evidence="1"/>
<dbReference type="EMBL" id="AE005673">
    <property type="protein sequence ID" value="AAK22474.1"/>
    <property type="molecule type" value="Genomic_DNA"/>
</dbReference>
<dbReference type="PIR" id="F87309">
    <property type="entry name" value="F87309"/>
</dbReference>
<dbReference type="RefSeq" id="NP_419306.1">
    <property type="nucleotide sequence ID" value="NC_002696.2"/>
</dbReference>
<dbReference type="RefSeq" id="WP_010918375.1">
    <property type="nucleotide sequence ID" value="NC_002696.2"/>
</dbReference>
<dbReference type="SMR" id="Q9AAV6"/>
<dbReference type="STRING" id="190650.CC_0487"/>
<dbReference type="EnsemblBacteria" id="AAK22474">
    <property type="protein sequence ID" value="AAK22474"/>
    <property type="gene ID" value="CC_0487"/>
</dbReference>
<dbReference type="KEGG" id="ccr:CC_0487"/>
<dbReference type="PATRIC" id="fig|190650.5.peg.495"/>
<dbReference type="eggNOG" id="COG0462">
    <property type="taxonomic scope" value="Bacteria"/>
</dbReference>
<dbReference type="HOGENOM" id="CLU_033546_4_0_5"/>
<dbReference type="BioCyc" id="CAULO:CC0487-MONOMER"/>
<dbReference type="UniPathway" id="UPA00087">
    <property type="reaction ID" value="UER00172"/>
</dbReference>
<dbReference type="Proteomes" id="UP000001816">
    <property type="component" value="Chromosome"/>
</dbReference>
<dbReference type="GO" id="GO:0005737">
    <property type="term" value="C:cytoplasm"/>
    <property type="evidence" value="ECO:0007669"/>
    <property type="project" value="UniProtKB-SubCell"/>
</dbReference>
<dbReference type="GO" id="GO:0002189">
    <property type="term" value="C:ribose phosphate diphosphokinase complex"/>
    <property type="evidence" value="ECO:0007669"/>
    <property type="project" value="TreeGrafter"/>
</dbReference>
<dbReference type="GO" id="GO:0005524">
    <property type="term" value="F:ATP binding"/>
    <property type="evidence" value="ECO:0007669"/>
    <property type="project" value="UniProtKB-KW"/>
</dbReference>
<dbReference type="GO" id="GO:0016301">
    <property type="term" value="F:kinase activity"/>
    <property type="evidence" value="ECO:0007669"/>
    <property type="project" value="UniProtKB-KW"/>
</dbReference>
<dbReference type="GO" id="GO:0000287">
    <property type="term" value="F:magnesium ion binding"/>
    <property type="evidence" value="ECO:0007669"/>
    <property type="project" value="UniProtKB-UniRule"/>
</dbReference>
<dbReference type="GO" id="GO:0004749">
    <property type="term" value="F:ribose phosphate diphosphokinase activity"/>
    <property type="evidence" value="ECO:0007669"/>
    <property type="project" value="UniProtKB-UniRule"/>
</dbReference>
<dbReference type="GO" id="GO:0006015">
    <property type="term" value="P:5-phosphoribose 1-diphosphate biosynthetic process"/>
    <property type="evidence" value="ECO:0007669"/>
    <property type="project" value="UniProtKB-UniRule"/>
</dbReference>
<dbReference type="GO" id="GO:0006164">
    <property type="term" value="P:purine nucleotide biosynthetic process"/>
    <property type="evidence" value="ECO:0007669"/>
    <property type="project" value="TreeGrafter"/>
</dbReference>
<dbReference type="GO" id="GO:0009156">
    <property type="term" value="P:ribonucleoside monophosphate biosynthetic process"/>
    <property type="evidence" value="ECO:0007669"/>
    <property type="project" value="InterPro"/>
</dbReference>
<dbReference type="CDD" id="cd06223">
    <property type="entry name" value="PRTases_typeI"/>
    <property type="match status" value="1"/>
</dbReference>
<dbReference type="FunFam" id="3.40.50.2020:FF:000001">
    <property type="entry name" value="Ribose-phosphate pyrophosphokinase"/>
    <property type="match status" value="1"/>
</dbReference>
<dbReference type="Gene3D" id="3.40.50.2020">
    <property type="match status" value="2"/>
</dbReference>
<dbReference type="HAMAP" id="MF_00583_B">
    <property type="entry name" value="RibP_PPkinase_B"/>
    <property type="match status" value="1"/>
</dbReference>
<dbReference type="InterPro" id="IPR000842">
    <property type="entry name" value="PRib_PP_synth_CS"/>
</dbReference>
<dbReference type="InterPro" id="IPR029099">
    <property type="entry name" value="Pribosyltran_N"/>
</dbReference>
<dbReference type="InterPro" id="IPR000836">
    <property type="entry name" value="PRibTrfase_dom"/>
</dbReference>
<dbReference type="InterPro" id="IPR029057">
    <property type="entry name" value="PRTase-like"/>
</dbReference>
<dbReference type="InterPro" id="IPR005946">
    <property type="entry name" value="Rib-P_diPkinase"/>
</dbReference>
<dbReference type="InterPro" id="IPR037515">
    <property type="entry name" value="Rib-P_diPkinase_bac"/>
</dbReference>
<dbReference type="NCBIfam" id="NF002320">
    <property type="entry name" value="PRK01259.1"/>
    <property type="match status" value="1"/>
</dbReference>
<dbReference type="NCBIfam" id="TIGR01251">
    <property type="entry name" value="ribP_PPkin"/>
    <property type="match status" value="1"/>
</dbReference>
<dbReference type="PANTHER" id="PTHR10210">
    <property type="entry name" value="RIBOSE-PHOSPHATE DIPHOSPHOKINASE FAMILY MEMBER"/>
    <property type="match status" value="1"/>
</dbReference>
<dbReference type="PANTHER" id="PTHR10210:SF41">
    <property type="entry name" value="RIBOSE-PHOSPHATE PYROPHOSPHOKINASE 1, CHLOROPLASTIC"/>
    <property type="match status" value="1"/>
</dbReference>
<dbReference type="Pfam" id="PF14572">
    <property type="entry name" value="Pribosyl_synth"/>
    <property type="match status" value="1"/>
</dbReference>
<dbReference type="Pfam" id="PF13793">
    <property type="entry name" value="Pribosyltran_N"/>
    <property type="match status" value="1"/>
</dbReference>
<dbReference type="SMART" id="SM01400">
    <property type="entry name" value="Pribosyltran_N"/>
    <property type="match status" value="1"/>
</dbReference>
<dbReference type="SUPFAM" id="SSF53271">
    <property type="entry name" value="PRTase-like"/>
    <property type="match status" value="1"/>
</dbReference>
<dbReference type="PROSITE" id="PS00114">
    <property type="entry name" value="PRPP_SYNTHASE"/>
    <property type="match status" value="1"/>
</dbReference>
<name>KPRS_CAUVC</name>
<keyword id="KW-0067">ATP-binding</keyword>
<keyword id="KW-0963">Cytoplasm</keyword>
<keyword id="KW-0418">Kinase</keyword>
<keyword id="KW-0460">Magnesium</keyword>
<keyword id="KW-0479">Metal-binding</keyword>
<keyword id="KW-0545">Nucleotide biosynthesis</keyword>
<keyword id="KW-0547">Nucleotide-binding</keyword>
<keyword id="KW-1185">Reference proteome</keyword>
<keyword id="KW-0808">Transferase</keyword>
<sequence>MKLLSGNSNRPLSQAIAEYLDMPLTRAQVRRFADLEVFVTIDENVRGEDVFVIQSTSYPANDNLMELLICIDALKRASGKRITAVIPYFGYARQDRKTGGRTPISAKLVANLITRSGADRVLTMDLHAGQIQGFFDIPTDNLLPSRLMAEDIRRHYPMGDDLMVVSPDVGGVVRARALAKRLDDADLAIVDKRRSGPGQSEVMNIIGDVKDRRCILFDDIADSAGTLCNAAQALMAHGAKSVSAYITHGVLSGAAADRVANSVLTELVVTDSIEASDPAKACPKIRYVSCAPLIGEAIRRIANEESVSKLFD</sequence>
<organism>
    <name type="scientific">Caulobacter vibrioides (strain ATCC 19089 / CIP 103742 / CB 15)</name>
    <name type="common">Caulobacter crescentus</name>
    <dbReference type="NCBI Taxonomy" id="190650"/>
    <lineage>
        <taxon>Bacteria</taxon>
        <taxon>Pseudomonadati</taxon>
        <taxon>Pseudomonadota</taxon>
        <taxon>Alphaproteobacteria</taxon>
        <taxon>Caulobacterales</taxon>
        <taxon>Caulobacteraceae</taxon>
        <taxon>Caulobacter</taxon>
    </lineage>
</organism>
<proteinExistence type="inferred from homology"/>
<comment type="function">
    <text evidence="1">Involved in the biosynthesis of the central metabolite phospho-alpha-D-ribosyl-1-pyrophosphate (PRPP) via the transfer of pyrophosphoryl group from ATP to 1-hydroxyl of ribose-5-phosphate (Rib-5-P).</text>
</comment>
<comment type="catalytic activity">
    <reaction evidence="1">
        <text>D-ribose 5-phosphate + ATP = 5-phospho-alpha-D-ribose 1-diphosphate + AMP + H(+)</text>
        <dbReference type="Rhea" id="RHEA:15609"/>
        <dbReference type="ChEBI" id="CHEBI:15378"/>
        <dbReference type="ChEBI" id="CHEBI:30616"/>
        <dbReference type="ChEBI" id="CHEBI:58017"/>
        <dbReference type="ChEBI" id="CHEBI:78346"/>
        <dbReference type="ChEBI" id="CHEBI:456215"/>
        <dbReference type="EC" id="2.7.6.1"/>
    </reaction>
</comment>
<comment type="cofactor">
    <cofactor evidence="1">
        <name>Mg(2+)</name>
        <dbReference type="ChEBI" id="CHEBI:18420"/>
    </cofactor>
    <text evidence="1">Binds 2 Mg(2+) ions per subunit.</text>
</comment>
<comment type="pathway">
    <text evidence="1">Metabolic intermediate biosynthesis; 5-phospho-alpha-D-ribose 1-diphosphate biosynthesis; 5-phospho-alpha-D-ribose 1-diphosphate from D-ribose 5-phosphate (route I): step 1/1.</text>
</comment>
<comment type="subunit">
    <text evidence="1">Homohexamer.</text>
</comment>
<comment type="subcellular location">
    <subcellularLocation>
        <location evidence="1">Cytoplasm</location>
    </subcellularLocation>
</comment>
<comment type="similarity">
    <text evidence="1">Belongs to the ribose-phosphate pyrophosphokinase family. Class I subfamily.</text>
</comment>
<reference key="1">
    <citation type="journal article" date="2001" name="Proc. Natl. Acad. Sci. U.S.A.">
        <title>Complete genome sequence of Caulobacter crescentus.</title>
        <authorList>
            <person name="Nierman W.C."/>
            <person name="Feldblyum T.V."/>
            <person name="Laub M.T."/>
            <person name="Paulsen I.T."/>
            <person name="Nelson K.E."/>
            <person name="Eisen J.A."/>
            <person name="Heidelberg J.F."/>
            <person name="Alley M.R.K."/>
            <person name="Ohta N."/>
            <person name="Maddock J.R."/>
            <person name="Potocka I."/>
            <person name="Nelson W.C."/>
            <person name="Newton A."/>
            <person name="Stephens C."/>
            <person name="Phadke N.D."/>
            <person name="Ely B."/>
            <person name="DeBoy R.T."/>
            <person name="Dodson R.J."/>
            <person name="Durkin A.S."/>
            <person name="Gwinn M.L."/>
            <person name="Haft D.H."/>
            <person name="Kolonay J.F."/>
            <person name="Smit J."/>
            <person name="Craven M.B."/>
            <person name="Khouri H.M."/>
            <person name="Shetty J."/>
            <person name="Berry K.J."/>
            <person name="Utterback T.R."/>
            <person name="Tran K."/>
            <person name="Wolf A.M."/>
            <person name="Vamathevan J.J."/>
            <person name="Ermolaeva M.D."/>
            <person name="White O."/>
            <person name="Salzberg S.L."/>
            <person name="Venter J.C."/>
            <person name="Shapiro L."/>
            <person name="Fraser C.M."/>
        </authorList>
    </citation>
    <scope>NUCLEOTIDE SEQUENCE [LARGE SCALE GENOMIC DNA]</scope>
    <source>
        <strain>ATCC 19089 / CIP 103742 / CB 15</strain>
    </source>
</reference>